<sequence length="411" mass="44697">MAAISPANATTAASLSLPQFSSTSSSLSSSSSPSFLNFKTASVSNRCIKCGVRSLENHSGHRSLDFLSNGDPISLINPNSSSPITMAAATSESGSKSSKRVCLFHSDETRDLAERIVAKSDCIELRSINWKKFDDGFPNLFIQNAQGIRGQHVAFLASFSSPAVIFEQLSVIYALPKLFVSSFTLVLPFFPTGTSERMEDEGDVATAFTLARILSNIPTSRGGPTSLVTFDIHALQERFYFGDTILPCFESGIPLLKSRLQSLPDSDNISIAFPDDGAWKRFHKQLQHYPTIVCNKVRMGDKRIVRIKEGDAEGRHVVIVDDLVQSGGTLIECQKVLAAHGAAKISAYVTHGIFPRSSWKRFKLDTKGDPAEGLSYFWITDSCGMTVKEVMNKPPFEVLSLAGSIASALQV</sequence>
<accession>Q93Z66</accession>
<accession>Q9SAD2</accession>
<accession>Q9SGY0</accession>
<accession>Q9XFR3</accession>
<name>KPRS3_ARATH</name>
<keyword id="KW-0067">ATP-binding</keyword>
<keyword id="KW-0150">Chloroplast</keyword>
<keyword id="KW-0418">Kinase</keyword>
<keyword id="KW-0460">Magnesium</keyword>
<keyword id="KW-0479">Metal-binding</keyword>
<keyword id="KW-0545">Nucleotide biosynthesis</keyword>
<keyword id="KW-0547">Nucleotide-binding</keyword>
<keyword id="KW-0934">Plastid</keyword>
<keyword id="KW-1185">Reference proteome</keyword>
<keyword id="KW-0808">Transferase</keyword>
<keyword id="KW-0809">Transit peptide</keyword>
<organism>
    <name type="scientific">Arabidopsis thaliana</name>
    <name type="common">Mouse-ear cress</name>
    <dbReference type="NCBI Taxonomy" id="3702"/>
    <lineage>
        <taxon>Eukaryota</taxon>
        <taxon>Viridiplantae</taxon>
        <taxon>Streptophyta</taxon>
        <taxon>Embryophyta</taxon>
        <taxon>Tracheophyta</taxon>
        <taxon>Spermatophyta</taxon>
        <taxon>Magnoliopsida</taxon>
        <taxon>eudicotyledons</taxon>
        <taxon>Gunneridae</taxon>
        <taxon>Pentapetalae</taxon>
        <taxon>rosids</taxon>
        <taxon>malvids</taxon>
        <taxon>Brassicales</taxon>
        <taxon>Brassicaceae</taxon>
        <taxon>Camelineae</taxon>
        <taxon>Arabidopsis</taxon>
    </lineage>
</organism>
<dbReference type="EC" id="2.7.6.1"/>
<dbReference type="EMBL" id="AC007354">
    <property type="protein sequence ID" value="AAD31343.1"/>
    <property type="status" value="ALT_SEQ"/>
    <property type="molecule type" value="Genomic_DNA"/>
</dbReference>
<dbReference type="EMBL" id="AC009398">
    <property type="protein sequence ID" value="AAF17658.1"/>
    <property type="status" value="ALT_SEQ"/>
    <property type="molecule type" value="Genomic_DNA"/>
</dbReference>
<dbReference type="EMBL" id="CP002684">
    <property type="protein sequence ID" value="AEE28630.1"/>
    <property type="molecule type" value="Genomic_DNA"/>
</dbReference>
<dbReference type="EMBL" id="AY058091">
    <property type="protein sequence ID" value="AAL24199.1"/>
    <property type="molecule type" value="mRNA"/>
</dbReference>
<dbReference type="EMBL" id="AY090310">
    <property type="protein sequence ID" value="AAL90971.1"/>
    <property type="molecule type" value="mRNA"/>
</dbReference>
<dbReference type="EMBL" id="AJ012406">
    <property type="protein sequence ID" value="CAB43552.1"/>
    <property type="status" value="ALT_INIT"/>
    <property type="molecule type" value="mRNA"/>
</dbReference>
<dbReference type="PIR" id="D86240">
    <property type="entry name" value="D86240"/>
</dbReference>
<dbReference type="PIR" id="T52591">
    <property type="entry name" value="T52591"/>
</dbReference>
<dbReference type="RefSeq" id="NP_172540.1">
    <property type="nucleotide sequence ID" value="NM_100946.3"/>
</dbReference>
<dbReference type="SMR" id="Q93Z66"/>
<dbReference type="BioGRID" id="22853">
    <property type="interactions" value="2"/>
</dbReference>
<dbReference type="FunCoup" id="Q93Z66">
    <property type="interactions" value="111"/>
</dbReference>
<dbReference type="STRING" id="3702.Q93Z66"/>
<dbReference type="PaxDb" id="3702-AT1G10700.1"/>
<dbReference type="ProteomicsDB" id="250759"/>
<dbReference type="EnsemblPlants" id="AT1G10700.1">
    <property type="protein sequence ID" value="AT1G10700.1"/>
    <property type="gene ID" value="AT1G10700"/>
</dbReference>
<dbReference type="GeneID" id="837613"/>
<dbReference type="Gramene" id="AT1G10700.1">
    <property type="protein sequence ID" value="AT1G10700.1"/>
    <property type="gene ID" value="AT1G10700"/>
</dbReference>
<dbReference type="KEGG" id="ath:AT1G10700"/>
<dbReference type="Araport" id="AT1G10700"/>
<dbReference type="TAIR" id="AT1G10700">
    <property type="gene designation" value="PRS3"/>
</dbReference>
<dbReference type="eggNOG" id="KOG1448">
    <property type="taxonomic scope" value="Eukaryota"/>
</dbReference>
<dbReference type="HOGENOM" id="CLU_048814_1_0_1"/>
<dbReference type="InParanoid" id="Q93Z66"/>
<dbReference type="OMA" id="SWERFGH"/>
<dbReference type="PhylomeDB" id="Q93Z66"/>
<dbReference type="BioCyc" id="ARA:AT1G10700-MONOMER"/>
<dbReference type="PRO" id="PR:Q93Z66"/>
<dbReference type="Proteomes" id="UP000006548">
    <property type="component" value="Chromosome 1"/>
</dbReference>
<dbReference type="ExpressionAtlas" id="Q93Z66">
    <property type="expression patterns" value="baseline and differential"/>
</dbReference>
<dbReference type="GO" id="GO:0009507">
    <property type="term" value="C:chloroplast"/>
    <property type="evidence" value="ECO:0007669"/>
    <property type="project" value="UniProtKB-SubCell"/>
</dbReference>
<dbReference type="GO" id="GO:0005524">
    <property type="term" value="F:ATP binding"/>
    <property type="evidence" value="ECO:0007669"/>
    <property type="project" value="UniProtKB-KW"/>
</dbReference>
<dbReference type="GO" id="GO:0016301">
    <property type="term" value="F:kinase activity"/>
    <property type="evidence" value="ECO:0007669"/>
    <property type="project" value="UniProtKB-KW"/>
</dbReference>
<dbReference type="GO" id="GO:0000287">
    <property type="term" value="F:magnesium ion binding"/>
    <property type="evidence" value="ECO:0007669"/>
    <property type="project" value="InterPro"/>
</dbReference>
<dbReference type="GO" id="GO:0004749">
    <property type="term" value="F:ribose phosphate diphosphokinase activity"/>
    <property type="evidence" value="ECO:0007669"/>
    <property type="project" value="UniProtKB-EC"/>
</dbReference>
<dbReference type="GO" id="GO:0009165">
    <property type="term" value="P:nucleotide biosynthetic process"/>
    <property type="evidence" value="ECO:0007669"/>
    <property type="project" value="UniProtKB-KW"/>
</dbReference>
<dbReference type="CDD" id="cd06223">
    <property type="entry name" value="PRTases_typeI"/>
    <property type="match status" value="1"/>
</dbReference>
<dbReference type="FunFam" id="3.40.50.2020:FF:000034">
    <property type="entry name" value="Ribose-phosphate pyrophosphokinase 4"/>
    <property type="match status" value="1"/>
</dbReference>
<dbReference type="FunFam" id="3.40.50.2020:FF:000032">
    <property type="entry name" value="ribose-phosphate pyrophosphokinase 4"/>
    <property type="match status" value="1"/>
</dbReference>
<dbReference type="Gene3D" id="3.40.50.2020">
    <property type="match status" value="2"/>
</dbReference>
<dbReference type="InterPro" id="IPR029099">
    <property type="entry name" value="Pribosyltran_N"/>
</dbReference>
<dbReference type="InterPro" id="IPR000836">
    <property type="entry name" value="PRibTrfase_dom"/>
</dbReference>
<dbReference type="InterPro" id="IPR029057">
    <property type="entry name" value="PRTase-like"/>
</dbReference>
<dbReference type="InterPro" id="IPR005946">
    <property type="entry name" value="Rib-P_diPkinase"/>
</dbReference>
<dbReference type="NCBIfam" id="TIGR01251">
    <property type="entry name" value="ribP_PPkin"/>
    <property type="match status" value="1"/>
</dbReference>
<dbReference type="PANTHER" id="PTHR10210">
    <property type="entry name" value="RIBOSE-PHOSPHATE DIPHOSPHOKINASE FAMILY MEMBER"/>
    <property type="match status" value="1"/>
</dbReference>
<dbReference type="PANTHER" id="PTHR10210:SF45">
    <property type="entry name" value="RIBOSE-PHOSPHATE PYROPHOSPHOKINASE 3, CHLOROPLASTIC"/>
    <property type="match status" value="1"/>
</dbReference>
<dbReference type="Pfam" id="PF00156">
    <property type="entry name" value="Pribosyltran"/>
    <property type="match status" value="1"/>
</dbReference>
<dbReference type="Pfam" id="PF13793">
    <property type="entry name" value="Pribosyltran_N"/>
    <property type="match status" value="1"/>
</dbReference>
<dbReference type="SMART" id="SM01400">
    <property type="entry name" value="Pribosyltran_N"/>
    <property type="match status" value="1"/>
</dbReference>
<dbReference type="SUPFAM" id="SSF53271">
    <property type="entry name" value="PRTase-like"/>
    <property type="match status" value="2"/>
</dbReference>
<proteinExistence type="evidence at transcript level"/>
<protein>
    <recommendedName>
        <fullName>Ribose-phosphate pyrophosphokinase 3, chloroplastic</fullName>
        <ecNumber>2.7.6.1</ecNumber>
    </recommendedName>
    <alternativeName>
        <fullName>Phosphoribosyl pyrophosphate synthase 3</fullName>
    </alternativeName>
</protein>
<comment type="catalytic activity">
    <reaction>
        <text>D-ribose 5-phosphate + ATP = 5-phospho-alpha-D-ribose 1-diphosphate + AMP + H(+)</text>
        <dbReference type="Rhea" id="RHEA:15609"/>
        <dbReference type="ChEBI" id="CHEBI:15378"/>
        <dbReference type="ChEBI" id="CHEBI:30616"/>
        <dbReference type="ChEBI" id="CHEBI:58017"/>
        <dbReference type="ChEBI" id="CHEBI:78346"/>
        <dbReference type="ChEBI" id="CHEBI:456215"/>
        <dbReference type="EC" id="2.7.6.1"/>
    </reaction>
</comment>
<comment type="subcellular location">
    <subcellularLocation>
        <location evidence="2">Plastid</location>
        <location evidence="2">Chloroplast</location>
    </subcellularLocation>
</comment>
<comment type="similarity">
    <text evidence="2">Belongs to the ribose-phosphate pyrophosphokinase family.</text>
</comment>
<comment type="sequence caution" evidence="2">
    <conflict type="erroneous gene model prediction">
        <sequence resource="EMBL-CDS" id="AAD31343"/>
    </conflict>
</comment>
<comment type="sequence caution" evidence="2">
    <conflict type="erroneous gene model prediction">
        <sequence resource="EMBL-CDS" id="AAF17658"/>
    </conflict>
</comment>
<comment type="sequence caution" evidence="2">
    <conflict type="erroneous initiation">
        <sequence resource="EMBL-CDS" id="CAB43552"/>
    </conflict>
</comment>
<evidence type="ECO:0000255" key="1"/>
<evidence type="ECO:0000305" key="2"/>
<feature type="transit peptide" description="Chloroplast" evidence="1">
    <location>
        <begin position="1"/>
        <end position="39"/>
    </location>
</feature>
<feature type="chain" id="PRO_0000141094" description="Ribose-phosphate pyrophosphokinase 3, chloroplastic">
    <location>
        <begin position="40"/>
        <end position="411"/>
    </location>
</feature>
<feature type="region of interest" description="Binding of phosphoribosylpyrophosphate" evidence="1">
    <location>
        <begin position="314"/>
        <end position="329"/>
    </location>
</feature>
<feature type="binding site" evidence="1">
    <location>
        <position position="231"/>
    </location>
    <ligand>
        <name>Mg(2+)</name>
        <dbReference type="ChEBI" id="CHEBI:18420"/>
    </ligand>
</feature>
<feature type="binding site" evidence="1">
    <location>
        <position position="233"/>
    </location>
    <ligand>
        <name>Mg(2+)</name>
        <dbReference type="ChEBI" id="CHEBI:18420"/>
    </ligand>
</feature>
<reference key="1">
    <citation type="journal article" date="2000" name="Nature">
        <title>Sequence and analysis of chromosome 1 of the plant Arabidopsis thaliana.</title>
        <authorList>
            <person name="Theologis A."/>
            <person name="Ecker J.R."/>
            <person name="Palm C.J."/>
            <person name="Federspiel N.A."/>
            <person name="Kaul S."/>
            <person name="White O."/>
            <person name="Alonso J."/>
            <person name="Altafi H."/>
            <person name="Araujo R."/>
            <person name="Bowman C.L."/>
            <person name="Brooks S.Y."/>
            <person name="Buehler E."/>
            <person name="Chan A."/>
            <person name="Chao Q."/>
            <person name="Chen H."/>
            <person name="Cheuk R.F."/>
            <person name="Chin C.W."/>
            <person name="Chung M.K."/>
            <person name="Conn L."/>
            <person name="Conway A.B."/>
            <person name="Conway A.R."/>
            <person name="Creasy T.H."/>
            <person name="Dewar K."/>
            <person name="Dunn P."/>
            <person name="Etgu P."/>
            <person name="Feldblyum T.V."/>
            <person name="Feng J.-D."/>
            <person name="Fong B."/>
            <person name="Fujii C.Y."/>
            <person name="Gill J.E."/>
            <person name="Goldsmith A.D."/>
            <person name="Haas B."/>
            <person name="Hansen N.F."/>
            <person name="Hughes B."/>
            <person name="Huizar L."/>
            <person name="Hunter J.L."/>
            <person name="Jenkins J."/>
            <person name="Johnson-Hopson C."/>
            <person name="Khan S."/>
            <person name="Khaykin E."/>
            <person name="Kim C.J."/>
            <person name="Koo H.L."/>
            <person name="Kremenetskaia I."/>
            <person name="Kurtz D.B."/>
            <person name="Kwan A."/>
            <person name="Lam B."/>
            <person name="Langin-Hooper S."/>
            <person name="Lee A."/>
            <person name="Lee J.M."/>
            <person name="Lenz C.A."/>
            <person name="Li J.H."/>
            <person name="Li Y.-P."/>
            <person name="Lin X."/>
            <person name="Liu S.X."/>
            <person name="Liu Z.A."/>
            <person name="Luros J.S."/>
            <person name="Maiti R."/>
            <person name="Marziali A."/>
            <person name="Militscher J."/>
            <person name="Miranda M."/>
            <person name="Nguyen M."/>
            <person name="Nierman W.C."/>
            <person name="Osborne B.I."/>
            <person name="Pai G."/>
            <person name="Peterson J."/>
            <person name="Pham P.K."/>
            <person name="Rizzo M."/>
            <person name="Rooney T."/>
            <person name="Rowley D."/>
            <person name="Sakano H."/>
            <person name="Salzberg S.L."/>
            <person name="Schwartz J.R."/>
            <person name="Shinn P."/>
            <person name="Southwick A.M."/>
            <person name="Sun H."/>
            <person name="Tallon L.J."/>
            <person name="Tambunga G."/>
            <person name="Toriumi M.J."/>
            <person name="Town C.D."/>
            <person name="Utterback T."/>
            <person name="Van Aken S."/>
            <person name="Vaysberg M."/>
            <person name="Vysotskaia V.S."/>
            <person name="Walker M."/>
            <person name="Wu D."/>
            <person name="Yu G."/>
            <person name="Fraser C.M."/>
            <person name="Venter J.C."/>
            <person name="Davis R.W."/>
        </authorList>
    </citation>
    <scope>NUCLEOTIDE SEQUENCE [LARGE SCALE GENOMIC DNA]</scope>
    <source>
        <strain>cv. Columbia</strain>
    </source>
</reference>
<reference key="2">
    <citation type="journal article" date="2017" name="Plant J.">
        <title>Araport11: a complete reannotation of the Arabidopsis thaliana reference genome.</title>
        <authorList>
            <person name="Cheng C.Y."/>
            <person name="Krishnakumar V."/>
            <person name="Chan A.P."/>
            <person name="Thibaud-Nissen F."/>
            <person name="Schobel S."/>
            <person name="Town C.D."/>
        </authorList>
    </citation>
    <scope>GENOME REANNOTATION</scope>
    <source>
        <strain>cv. Columbia</strain>
    </source>
</reference>
<reference key="3">
    <citation type="journal article" date="2003" name="Science">
        <title>Empirical analysis of transcriptional activity in the Arabidopsis genome.</title>
        <authorList>
            <person name="Yamada K."/>
            <person name="Lim J."/>
            <person name="Dale J.M."/>
            <person name="Chen H."/>
            <person name="Shinn P."/>
            <person name="Palm C.J."/>
            <person name="Southwick A.M."/>
            <person name="Wu H.C."/>
            <person name="Kim C.J."/>
            <person name="Nguyen M."/>
            <person name="Pham P.K."/>
            <person name="Cheuk R.F."/>
            <person name="Karlin-Newmann G."/>
            <person name="Liu S.X."/>
            <person name="Lam B."/>
            <person name="Sakano H."/>
            <person name="Wu T."/>
            <person name="Yu G."/>
            <person name="Miranda M."/>
            <person name="Quach H.L."/>
            <person name="Tripp M."/>
            <person name="Chang C.H."/>
            <person name="Lee J.M."/>
            <person name="Toriumi M.J."/>
            <person name="Chan M.M."/>
            <person name="Tang C.C."/>
            <person name="Onodera C.S."/>
            <person name="Deng J.M."/>
            <person name="Akiyama K."/>
            <person name="Ansari Y."/>
            <person name="Arakawa T."/>
            <person name="Banh J."/>
            <person name="Banno F."/>
            <person name="Bowser L."/>
            <person name="Brooks S.Y."/>
            <person name="Carninci P."/>
            <person name="Chao Q."/>
            <person name="Choy N."/>
            <person name="Enju A."/>
            <person name="Goldsmith A.D."/>
            <person name="Gurjal M."/>
            <person name="Hansen N.F."/>
            <person name="Hayashizaki Y."/>
            <person name="Johnson-Hopson C."/>
            <person name="Hsuan V.W."/>
            <person name="Iida K."/>
            <person name="Karnes M."/>
            <person name="Khan S."/>
            <person name="Koesema E."/>
            <person name="Ishida J."/>
            <person name="Jiang P.X."/>
            <person name="Jones T."/>
            <person name="Kawai J."/>
            <person name="Kamiya A."/>
            <person name="Meyers C."/>
            <person name="Nakajima M."/>
            <person name="Narusaka M."/>
            <person name="Seki M."/>
            <person name="Sakurai T."/>
            <person name="Satou M."/>
            <person name="Tamse R."/>
            <person name="Vaysberg M."/>
            <person name="Wallender E.K."/>
            <person name="Wong C."/>
            <person name="Yamamura Y."/>
            <person name="Yuan S."/>
            <person name="Shinozaki K."/>
            <person name="Davis R.W."/>
            <person name="Theologis A."/>
            <person name="Ecker J.R."/>
        </authorList>
    </citation>
    <scope>NUCLEOTIDE SEQUENCE [LARGE SCALE MRNA]</scope>
    <source>
        <strain>cv. Columbia</strain>
    </source>
</reference>
<reference key="4">
    <citation type="journal article" date="1999" name="Biochim. Biophys. Acta">
        <title>Cloning and sequencing of cDNAs specifying a novel class of phosphoribosyl diphosphate synthase in Arabidopsis thaliana.</title>
        <authorList>
            <person name="Krath B.N."/>
            <person name="Eriksen T.A."/>
            <person name="Poulsen T.S."/>
            <person name="Hove-Jensen B."/>
        </authorList>
    </citation>
    <scope>NUCLEOTIDE SEQUENCE [MRNA] OF 42-411</scope>
    <source>
        <strain>cv. Columbia</strain>
        <tissue>Leaf</tissue>
    </source>
</reference>
<gene>
    <name type="primary">PRS3</name>
    <name type="ordered locus">At1g10700</name>
    <name type="ORF">F20B24.13</name>
    <name type="ORF">T16B5.16</name>
</gene>